<name>REXO4_DEBHA</name>
<proteinExistence type="inferred from homology"/>
<dbReference type="EC" id="3.1.-.-"/>
<dbReference type="EMBL" id="CR382139">
    <property type="protein sequence ID" value="CAG90433.2"/>
    <property type="molecule type" value="Genomic_DNA"/>
</dbReference>
<dbReference type="RefSeq" id="XP_461965.2">
    <property type="nucleotide sequence ID" value="XM_461965.1"/>
</dbReference>
<dbReference type="SMR" id="Q6BIK6"/>
<dbReference type="FunCoup" id="Q6BIK6">
    <property type="interactions" value="846"/>
</dbReference>
<dbReference type="STRING" id="284592.Q6BIK6"/>
<dbReference type="GeneID" id="2904855"/>
<dbReference type="KEGG" id="dha:DEHA2G09636g"/>
<dbReference type="VEuPathDB" id="FungiDB:DEHA2G09636g"/>
<dbReference type="eggNOG" id="KOG2249">
    <property type="taxonomic scope" value="Eukaryota"/>
</dbReference>
<dbReference type="HOGENOM" id="CLU_022453_2_0_1"/>
<dbReference type="InParanoid" id="Q6BIK6"/>
<dbReference type="OMA" id="DIQGSAH"/>
<dbReference type="OrthoDB" id="8191639at2759"/>
<dbReference type="Proteomes" id="UP000000599">
    <property type="component" value="Chromosome G"/>
</dbReference>
<dbReference type="GO" id="GO:0005634">
    <property type="term" value="C:nucleus"/>
    <property type="evidence" value="ECO:0007669"/>
    <property type="project" value="UniProtKB-SubCell"/>
</dbReference>
<dbReference type="GO" id="GO:0008408">
    <property type="term" value="F:3'-5' exonuclease activity"/>
    <property type="evidence" value="ECO:0007669"/>
    <property type="project" value="InterPro"/>
</dbReference>
<dbReference type="GO" id="GO:0003676">
    <property type="term" value="F:nucleic acid binding"/>
    <property type="evidence" value="ECO:0007669"/>
    <property type="project" value="InterPro"/>
</dbReference>
<dbReference type="GO" id="GO:0000027">
    <property type="term" value="P:ribosomal large subunit assembly"/>
    <property type="evidence" value="ECO:0007669"/>
    <property type="project" value="EnsemblFungi"/>
</dbReference>
<dbReference type="GO" id="GO:0006364">
    <property type="term" value="P:rRNA processing"/>
    <property type="evidence" value="ECO:0007669"/>
    <property type="project" value="UniProtKB-KW"/>
</dbReference>
<dbReference type="CDD" id="cd06144">
    <property type="entry name" value="REX4_like"/>
    <property type="match status" value="1"/>
</dbReference>
<dbReference type="FunFam" id="3.30.420.10:FF:000007">
    <property type="entry name" value="Interferon-stimulated exonuclease gene 20"/>
    <property type="match status" value="1"/>
</dbReference>
<dbReference type="Gene3D" id="3.30.420.10">
    <property type="entry name" value="Ribonuclease H-like superfamily/Ribonuclease H"/>
    <property type="match status" value="1"/>
</dbReference>
<dbReference type="InterPro" id="IPR013520">
    <property type="entry name" value="Exonuclease_RNaseT/DNA_pol3"/>
</dbReference>
<dbReference type="InterPro" id="IPR037431">
    <property type="entry name" value="REX4_DEDDh_dom"/>
</dbReference>
<dbReference type="InterPro" id="IPR047021">
    <property type="entry name" value="REXO1/3/4-like"/>
</dbReference>
<dbReference type="InterPro" id="IPR012337">
    <property type="entry name" value="RNaseH-like_sf"/>
</dbReference>
<dbReference type="InterPro" id="IPR036397">
    <property type="entry name" value="RNaseH_sf"/>
</dbReference>
<dbReference type="PANTHER" id="PTHR12801:SF45">
    <property type="entry name" value="RNA EXONUCLEASE 4"/>
    <property type="match status" value="1"/>
</dbReference>
<dbReference type="PANTHER" id="PTHR12801">
    <property type="entry name" value="RNA EXONUCLEASE REXO1 / RECO3 FAMILY MEMBER-RELATED"/>
    <property type="match status" value="1"/>
</dbReference>
<dbReference type="Pfam" id="PF00929">
    <property type="entry name" value="RNase_T"/>
    <property type="match status" value="1"/>
</dbReference>
<dbReference type="SMART" id="SM00479">
    <property type="entry name" value="EXOIII"/>
    <property type="match status" value="1"/>
</dbReference>
<dbReference type="SUPFAM" id="SSF53098">
    <property type="entry name" value="Ribonuclease H-like"/>
    <property type="match status" value="1"/>
</dbReference>
<protein>
    <recommendedName>
        <fullName>RNA exonuclease 4</fullName>
        <ecNumber>3.1.-.-</ecNumber>
    </recommendedName>
</protein>
<accession>Q6BIK6</accession>
<keyword id="KW-0269">Exonuclease</keyword>
<keyword id="KW-0378">Hydrolase</keyword>
<keyword id="KW-0540">Nuclease</keyword>
<keyword id="KW-0539">Nucleus</keyword>
<keyword id="KW-1185">Reference proteome</keyword>
<keyword id="KW-0698">rRNA processing</keyword>
<organism>
    <name type="scientific">Debaryomyces hansenii (strain ATCC 36239 / CBS 767 / BCRC 21394 / JCM 1990 / NBRC 0083 / IGC 2968)</name>
    <name type="common">Yeast</name>
    <name type="synonym">Torulaspora hansenii</name>
    <dbReference type="NCBI Taxonomy" id="284592"/>
    <lineage>
        <taxon>Eukaryota</taxon>
        <taxon>Fungi</taxon>
        <taxon>Dikarya</taxon>
        <taxon>Ascomycota</taxon>
        <taxon>Saccharomycotina</taxon>
        <taxon>Pichiomycetes</taxon>
        <taxon>Debaryomycetaceae</taxon>
        <taxon>Debaryomyces</taxon>
    </lineage>
</organism>
<feature type="chain" id="PRO_0000131695" description="RNA exonuclease 4">
    <location>
        <begin position="1"/>
        <end position="272"/>
    </location>
</feature>
<feature type="domain" description="Exonuclease">
    <location>
        <begin position="99"/>
        <end position="250"/>
    </location>
</feature>
<feature type="region of interest" description="Disordered" evidence="2">
    <location>
        <begin position="1"/>
        <end position="33"/>
    </location>
</feature>
<feature type="compositionally biased region" description="Low complexity" evidence="2">
    <location>
        <begin position="1"/>
        <end position="17"/>
    </location>
</feature>
<comment type="function">
    <text evidence="1">Exoribonuclease involved in ribosome biosynthesis. Involved in the processing of ITS1, the internal transcribed spacer localized between the 18S and 5.8S rRNAs (By similarity).</text>
</comment>
<comment type="subcellular location">
    <subcellularLocation>
        <location evidence="1">Nucleus</location>
    </subcellularLocation>
</comment>
<comment type="similarity">
    <text evidence="3">Belongs to the REXO4 family.</text>
</comment>
<evidence type="ECO:0000250" key="1"/>
<evidence type="ECO:0000256" key="2">
    <source>
        <dbReference type="SAM" id="MobiDB-lite"/>
    </source>
</evidence>
<evidence type="ECO:0000305" key="3"/>
<reference key="1">
    <citation type="journal article" date="2004" name="Nature">
        <title>Genome evolution in yeasts.</title>
        <authorList>
            <person name="Dujon B."/>
            <person name="Sherman D."/>
            <person name="Fischer G."/>
            <person name="Durrens P."/>
            <person name="Casaregola S."/>
            <person name="Lafontaine I."/>
            <person name="de Montigny J."/>
            <person name="Marck C."/>
            <person name="Neuveglise C."/>
            <person name="Talla E."/>
            <person name="Goffard N."/>
            <person name="Frangeul L."/>
            <person name="Aigle M."/>
            <person name="Anthouard V."/>
            <person name="Babour A."/>
            <person name="Barbe V."/>
            <person name="Barnay S."/>
            <person name="Blanchin S."/>
            <person name="Beckerich J.-M."/>
            <person name="Beyne E."/>
            <person name="Bleykasten C."/>
            <person name="Boisrame A."/>
            <person name="Boyer J."/>
            <person name="Cattolico L."/>
            <person name="Confanioleri F."/>
            <person name="de Daruvar A."/>
            <person name="Despons L."/>
            <person name="Fabre E."/>
            <person name="Fairhead C."/>
            <person name="Ferry-Dumazet H."/>
            <person name="Groppi A."/>
            <person name="Hantraye F."/>
            <person name="Hennequin C."/>
            <person name="Jauniaux N."/>
            <person name="Joyet P."/>
            <person name="Kachouri R."/>
            <person name="Kerrest A."/>
            <person name="Koszul R."/>
            <person name="Lemaire M."/>
            <person name="Lesur I."/>
            <person name="Ma L."/>
            <person name="Muller H."/>
            <person name="Nicaud J.-M."/>
            <person name="Nikolski M."/>
            <person name="Oztas S."/>
            <person name="Ozier-Kalogeropoulos O."/>
            <person name="Pellenz S."/>
            <person name="Potier S."/>
            <person name="Richard G.-F."/>
            <person name="Straub M.-L."/>
            <person name="Suleau A."/>
            <person name="Swennen D."/>
            <person name="Tekaia F."/>
            <person name="Wesolowski-Louvel M."/>
            <person name="Westhof E."/>
            <person name="Wirth B."/>
            <person name="Zeniou-Meyer M."/>
            <person name="Zivanovic Y."/>
            <person name="Bolotin-Fukuhara M."/>
            <person name="Thierry A."/>
            <person name="Bouchier C."/>
            <person name="Caudron B."/>
            <person name="Scarpelli C."/>
            <person name="Gaillardin C."/>
            <person name="Weissenbach J."/>
            <person name="Wincker P."/>
            <person name="Souciet J.-L."/>
        </authorList>
    </citation>
    <scope>NUCLEOTIDE SEQUENCE [LARGE SCALE GENOMIC DNA]</scope>
    <source>
        <strain>ATCC 36239 / CBS 767 / BCRC 21394 / JCM 1990 / NBRC 0083 / IGC 2968</strain>
    </source>
</reference>
<sequence>MTTTLSSNWKKLSSKLNQGSKVTKQPVKGKNGKTKIKKAELENTLNITPTLQKSTLSPIELALWTKENDINVSDIAVQTEKITLIPQGNDIRKKEPGKYLAMDCEFVGVGPEGTESALARVSIVNFYGHTVFDKFVKPRERVTDWRTWVSGVTPKHMNEAISFQEAQNETSKLLEGRILVGHAIHHDLDALFLSHPKSRIRDTSQYKPFRSISMGKTPSLKKLSSHFLKIDIQGSAHSSVEDARATMLLFRLHRKEFEQSIRTQNRKPEKTS</sequence>
<gene>
    <name type="primary">REX4</name>
    <name type="ordered locus">DEHA2G09636g</name>
</gene>